<comment type="similarity">
    <text evidence="1">Belongs to the bacterial ribosomal protein bL33 family.</text>
</comment>
<feature type="chain" id="PRO_1000115146" description="Large ribosomal subunit protein bL33">
    <location>
        <begin position="1"/>
        <end position="55"/>
    </location>
</feature>
<feature type="region of interest" description="Disordered" evidence="2">
    <location>
        <begin position="1"/>
        <end position="27"/>
    </location>
</feature>
<feature type="compositionally biased region" description="Basic and acidic residues" evidence="2">
    <location>
        <begin position="1"/>
        <end position="10"/>
    </location>
</feature>
<keyword id="KW-1185">Reference proteome</keyword>
<keyword id="KW-0687">Ribonucleoprotein</keyword>
<keyword id="KW-0689">Ribosomal protein</keyword>
<organism>
    <name type="scientific">Polaromonas naphthalenivorans (strain CJ2)</name>
    <dbReference type="NCBI Taxonomy" id="365044"/>
    <lineage>
        <taxon>Bacteria</taxon>
        <taxon>Pseudomonadati</taxon>
        <taxon>Pseudomonadota</taxon>
        <taxon>Betaproteobacteria</taxon>
        <taxon>Burkholderiales</taxon>
        <taxon>Comamonadaceae</taxon>
        <taxon>Polaromonas</taxon>
    </lineage>
</organism>
<evidence type="ECO:0000255" key="1">
    <source>
        <dbReference type="HAMAP-Rule" id="MF_00294"/>
    </source>
</evidence>
<evidence type="ECO:0000256" key="2">
    <source>
        <dbReference type="SAM" id="MobiDB-lite"/>
    </source>
</evidence>
<evidence type="ECO:0000305" key="3"/>
<name>RL33_POLNA</name>
<proteinExistence type="inferred from homology"/>
<dbReference type="EMBL" id="CP000529">
    <property type="protein sequence ID" value="ABM38513.1"/>
    <property type="molecule type" value="Genomic_DNA"/>
</dbReference>
<dbReference type="RefSeq" id="WP_011802584.1">
    <property type="nucleotide sequence ID" value="NC_008781.1"/>
</dbReference>
<dbReference type="SMR" id="A1VS85"/>
<dbReference type="STRING" id="365044.Pnap_3215"/>
<dbReference type="KEGG" id="pna:Pnap_3215"/>
<dbReference type="eggNOG" id="COG0267">
    <property type="taxonomic scope" value="Bacteria"/>
</dbReference>
<dbReference type="HOGENOM" id="CLU_190949_1_1_4"/>
<dbReference type="OrthoDB" id="21586at2"/>
<dbReference type="Proteomes" id="UP000000644">
    <property type="component" value="Chromosome"/>
</dbReference>
<dbReference type="GO" id="GO:0022625">
    <property type="term" value="C:cytosolic large ribosomal subunit"/>
    <property type="evidence" value="ECO:0007669"/>
    <property type="project" value="TreeGrafter"/>
</dbReference>
<dbReference type="GO" id="GO:0003735">
    <property type="term" value="F:structural constituent of ribosome"/>
    <property type="evidence" value="ECO:0007669"/>
    <property type="project" value="InterPro"/>
</dbReference>
<dbReference type="GO" id="GO:0006412">
    <property type="term" value="P:translation"/>
    <property type="evidence" value="ECO:0007669"/>
    <property type="project" value="UniProtKB-UniRule"/>
</dbReference>
<dbReference type="Gene3D" id="2.20.28.120">
    <property type="entry name" value="Ribosomal protein L33"/>
    <property type="match status" value="1"/>
</dbReference>
<dbReference type="HAMAP" id="MF_00294">
    <property type="entry name" value="Ribosomal_bL33"/>
    <property type="match status" value="1"/>
</dbReference>
<dbReference type="InterPro" id="IPR001705">
    <property type="entry name" value="Ribosomal_bL33"/>
</dbReference>
<dbReference type="InterPro" id="IPR038584">
    <property type="entry name" value="Ribosomal_bL33_sf"/>
</dbReference>
<dbReference type="InterPro" id="IPR011332">
    <property type="entry name" value="Ribosomal_zn-bd"/>
</dbReference>
<dbReference type="NCBIfam" id="NF001860">
    <property type="entry name" value="PRK00595.1"/>
    <property type="match status" value="1"/>
</dbReference>
<dbReference type="NCBIfam" id="TIGR01023">
    <property type="entry name" value="rpmG_bact"/>
    <property type="match status" value="1"/>
</dbReference>
<dbReference type="PANTHER" id="PTHR15238">
    <property type="entry name" value="54S RIBOSOMAL PROTEIN L39, MITOCHONDRIAL"/>
    <property type="match status" value="1"/>
</dbReference>
<dbReference type="PANTHER" id="PTHR15238:SF1">
    <property type="entry name" value="LARGE RIBOSOMAL SUBUNIT PROTEIN BL33M"/>
    <property type="match status" value="1"/>
</dbReference>
<dbReference type="Pfam" id="PF00471">
    <property type="entry name" value="Ribosomal_L33"/>
    <property type="match status" value="1"/>
</dbReference>
<dbReference type="SUPFAM" id="SSF57829">
    <property type="entry name" value="Zn-binding ribosomal proteins"/>
    <property type="match status" value="1"/>
</dbReference>
<gene>
    <name evidence="1" type="primary">rpmG</name>
    <name type="ordered locus">Pnap_3215</name>
</gene>
<protein>
    <recommendedName>
        <fullName evidence="1">Large ribosomal subunit protein bL33</fullName>
    </recommendedName>
    <alternativeName>
        <fullName evidence="3">50S ribosomal protein L33</fullName>
    </alternativeName>
</protein>
<reference key="1">
    <citation type="journal article" date="2009" name="Environ. Microbiol.">
        <title>The genome of Polaromonas naphthalenivorans strain CJ2, isolated from coal tar-contaminated sediment, reveals physiological and metabolic versatility and evolution through extensive horizontal gene transfer.</title>
        <authorList>
            <person name="Yagi J.M."/>
            <person name="Sims D."/>
            <person name="Brettin T."/>
            <person name="Bruce D."/>
            <person name="Madsen E.L."/>
        </authorList>
    </citation>
    <scope>NUCLEOTIDE SEQUENCE [LARGE SCALE GENOMIC DNA]</scope>
    <source>
        <strain>CJ2</strain>
    </source>
</reference>
<accession>A1VS85</accession>
<sequence length="55" mass="6382">MAKGGREKIKLQSTAGTGHFYTTDKNKKTTPEKMLIMKFDPKARKHVEYKEIKLK</sequence>